<sequence>MPLHYEVHGPADGEAVLLSSGLGGSAAFWQPQLGALLEAGHRVIAYDQRGTGRSPAALDAGYAIADMARDVVQILDATATPRCHLVGHALGGLVGLQLALDEPARVASLVLVNAWSKPNAHSARCFDARLALLDACGPRAYVEAQPIFLYPAAWCAEHAQRVADEVDHAFAHFPGEANMRARIGALRAFDIDARLGAITAPTLVAAAMDDALVPWTCSQRLADGLKDVTLHFLPHGGHAHSVTEAAVFNRSLLDFLARVSAPGVPA</sequence>
<comment type="function">
    <text evidence="1">Involved in pyrimidine catabolism. May facilitate the hydrolysis of carbamate, a reaction that can also occur spontaneously.</text>
</comment>
<comment type="catalytic activity">
    <reaction evidence="1">
        <text>carbamate + 2 H(+) = NH4(+) + CO2</text>
        <dbReference type="Rhea" id="RHEA:15649"/>
        <dbReference type="ChEBI" id="CHEBI:13941"/>
        <dbReference type="ChEBI" id="CHEBI:15378"/>
        <dbReference type="ChEBI" id="CHEBI:16526"/>
        <dbReference type="ChEBI" id="CHEBI:28938"/>
    </reaction>
</comment>
<comment type="similarity">
    <text evidence="1">Belongs to the AB hydrolase superfamily. Hydrolase RutD family.</text>
</comment>
<evidence type="ECO:0000255" key="1">
    <source>
        <dbReference type="HAMAP-Rule" id="MF_00832"/>
    </source>
</evidence>
<accession>C5CN82</accession>
<organism>
    <name type="scientific">Variovorax paradoxus (strain S110)</name>
    <dbReference type="NCBI Taxonomy" id="543728"/>
    <lineage>
        <taxon>Bacteria</taxon>
        <taxon>Pseudomonadati</taxon>
        <taxon>Pseudomonadota</taxon>
        <taxon>Betaproteobacteria</taxon>
        <taxon>Burkholderiales</taxon>
        <taxon>Comamonadaceae</taxon>
        <taxon>Variovorax</taxon>
    </lineage>
</organism>
<gene>
    <name evidence="1" type="primary">rutD</name>
    <name type="ordered locus">Vapar_4841</name>
</gene>
<keyword id="KW-0378">Hydrolase</keyword>
<proteinExistence type="inferred from homology"/>
<protein>
    <recommendedName>
        <fullName evidence="1">Putative carbamate hydrolase RutD</fullName>
        <ecNumber evidence="1">3.5.1.-</ecNumber>
    </recommendedName>
    <alternativeName>
        <fullName evidence="1">Aminohydrolase</fullName>
    </alternativeName>
</protein>
<name>RUTD_VARPS</name>
<dbReference type="EC" id="3.5.1.-" evidence="1"/>
<dbReference type="EMBL" id="CP001635">
    <property type="protein sequence ID" value="ACS21445.1"/>
    <property type="molecule type" value="Genomic_DNA"/>
</dbReference>
<dbReference type="SMR" id="C5CN82"/>
<dbReference type="STRING" id="543728.Vapar_4841"/>
<dbReference type="ESTHER" id="varps-rutd">
    <property type="family name" value="RutD"/>
</dbReference>
<dbReference type="KEGG" id="vap:Vapar_4841"/>
<dbReference type="eggNOG" id="COG2267">
    <property type="taxonomic scope" value="Bacteria"/>
</dbReference>
<dbReference type="HOGENOM" id="CLU_020336_50_1_4"/>
<dbReference type="OrthoDB" id="9779853at2"/>
<dbReference type="GO" id="GO:0016020">
    <property type="term" value="C:membrane"/>
    <property type="evidence" value="ECO:0007669"/>
    <property type="project" value="TreeGrafter"/>
</dbReference>
<dbReference type="GO" id="GO:0016811">
    <property type="term" value="F:hydrolase activity, acting on carbon-nitrogen (but not peptide) bonds, in linear amides"/>
    <property type="evidence" value="ECO:0007669"/>
    <property type="project" value="InterPro"/>
</dbReference>
<dbReference type="GO" id="GO:0047372">
    <property type="term" value="F:monoacylglycerol lipase activity"/>
    <property type="evidence" value="ECO:0007669"/>
    <property type="project" value="TreeGrafter"/>
</dbReference>
<dbReference type="GO" id="GO:0046464">
    <property type="term" value="P:acylglycerol catabolic process"/>
    <property type="evidence" value="ECO:0007669"/>
    <property type="project" value="TreeGrafter"/>
</dbReference>
<dbReference type="GO" id="GO:0019740">
    <property type="term" value="P:nitrogen utilization"/>
    <property type="evidence" value="ECO:0007669"/>
    <property type="project" value="UniProtKB-UniRule"/>
</dbReference>
<dbReference type="GO" id="GO:0006212">
    <property type="term" value="P:uracil catabolic process"/>
    <property type="evidence" value="ECO:0007669"/>
    <property type="project" value="UniProtKB-UniRule"/>
</dbReference>
<dbReference type="Gene3D" id="3.40.50.1820">
    <property type="entry name" value="alpha/beta hydrolase"/>
    <property type="match status" value="1"/>
</dbReference>
<dbReference type="HAMAP" id="MF_00832">
    <property type="entry name" value="RutD"/>
    <property type="match status" value="1"/>
</dbReference>
<dbReference type="InterPro" id="IPR000073">
    <property type="entry name" value="AB_hydrolase_1"/>
</dbReference>
<dbReference type="InterPro" id="IPR029058">
    <property type="entry name" value="AB_hydrolase_fold"/>
</dbReference>
<dbReference type="InterPro" id="IPR050266">
    <property type="entry name" value="AB_hydrolase_sf"/>
</dbReference>
<dbReference type="InterPro" id="IPR019913">
    <property type="entry name" value="Pyrimidine_utilisation_RutD"/>
</dbReference>
<dbReference type="NCBIfam" id="TIGR03611">
    <property type="entry name" value="RutD"/>
    <property type="match status" value="1"/>
</dbReference>
<dbReference type="PANTHER" id="PTHR43798">
    <property type="entry name" value="MONOACYLGLYCEROL LIPASE"/>
    <property type="match status" value="1"/>
</dbReference>
<dbReference type="PANTHER" id="PTHR43798:SF5">
    <property type="entry name" value="MONOACYLGLYCEROL LIPASE ABHD6"/>
    <property type="match status" value="1"/>
</dbReference>
<dbReference type="Pfam" id="PF00561">
    <property type="entry name" value="Abhydrolase_1"/>
    <property type="match status" value="1"/>
</dbReference>
<dbReference type="PRINTS" id="PR00111">
    <property type="entry name" value="ABHYDROLASE"/>
</dbReference>
<dbReference type="SUPFAM" id="SSF53474">
    <property type="entry name" value="alpha/beta-Hydrolases"/>
    <property type="match status" value="1"/>
</dbReference>
<reference key="1">
    <citation type="journal article" date="2011" name="J. Bacteriol.">
        <title>Complete genome sequence of the metabolically versatile plant growth-promoting endophyte, Variovorax paradoxus S110.</title>
        <authorList>
            <person name="Han J.I."/>
            <person name="Choi H.K."/>
            <person name="Lee S.W."/>
            <person name="Orwin P.M."/>
            <person name="Kim J."/>
            <person name="Laroe S.L."/>
            <person name="Kim T.G."/>
            <person name="O'Neil J."/>
            <person name="Leadbetter J.R."/>
            <person name="Lee S.Y."/>
            <person name="Hur C.G."/>
            <person name="Spain J.C."/>
            <person name="Ovchinnikova G."/>
            <person name="Goodwin L."/>
            <person name="Han C."/>
        </authorList>
    </citation>
    <scope>NUCLEOTIDE SEQUENCE [LARGE SCALE GENOMIC DNA]</scope>
    <source>
        <strain>S110</strain>
    </source>
</reference>
<feature type="chain" id="PRO_0000402986" description="Putative carbamate hydrolase RutD">
    <location>
        <begin position="1"/>
        <end position="266"/>
    </location>
</feature>
<feature type="domain" description="AB hydrolase-1" evidence="1">
    <location>
        <begin position="15"/>
        <end position="128"/>
    </location>
</feature>